<protein>
    <recommendedName>
        <fullName evidence="1">Photosystem II reaction center protein Y</fullName>
    </recommendedName>
</protein>
<organism>
    <name type="scientific">Cyanidioschyzon merolae (strain NIES-3377 / 10D)</name>
    <name type="common">Unicellular red alga</name>
    <dbReference type="NCBI Taxonomy" id="280699"/>
    <lineage>
        <taxon>Eukaryota</taxon>
        <taxon>Rhodophyta</taxon>
        <taxon>Bangiophyceae</taxon>
        <taxon>Cyanidiales</taxon>
        <taxon>Cyanidiaceae</taxon>
        <taxon>Cyanidioschyzon</taxon>
    </lineage>
</organism>
<keyword id="KW-0150">Chloroplast</keyword>
<keyword id="KW-0472">Membrane</keyword>
<keyword id="KW-0602">Photosynthesis</keyword>
<keyword id="KW-0604">Photosystem II</keyword>
<keyword id="KW-0934">Plastid</keyword>
<keyword id="KW-1185">Reference proteome</keyword>
<keyword id="KW-0793">Thylakoid</keyword>
<keyword id="KW-0812">Transmembrane</keyword>
<keyword id="KW-1133">Transmembrane helix</keyword>
<geneLocation type="chloroplast"/>
<sequence length="35" mass="3923">MDTRLLIVLLPIIAAASWAIYNIGKILLLQLTKRS</sequence>
<comment type="function">
    <text evidence="1">Loosely associated component of the core of photosystem II (PSII), it is not always seen in crystals. PSII is a light-driven water plastoquinone oxidoreductase, using light energy to abstract electrons from H(2)O, generating a proton gradient subsequently used for ATP formation.</text>
</comment>
<comment type="subunit">
    <text evidence="1">PSII is composed of 1 copy each of membrane proteins PsbA, PsbB, PsbC, PsbD, PsbE, PsbF, PsbH, PsbI, PsbJ, PsbK, PsbL, PsbM, PsbT, PsbX, PsbY, PsbZ, Psb30/Ycf12, at least 3 peripheral proteins of the oxygen-evolving complex and a large number of cofactors. It forms dimeric complexes.</text>
</comment>
<comment type="subcellular location">
    <subcellularLocation>
        <location evidence="1">Plastid</location>
        <location evidence="1">Chloroplast thylakoid membrane</location>
        <topology evidence="1">Single-pass membrane protein</topology>
    </subcellularLocation>
</comment>
<comment type="similarity">
    <text evidence="1">Belongs to the PsbY family.</text>
</comment>
<evidence type="ECO:0000255" key="1">
    <source>
        <dbReference type="HAMAP-Rule" id="MF_00717"/>
    </source>
</evidence>
<accession>Q85G61</accession>
<dbReference type="EMBL" id="AB002583">
    <property type="protein sequence ID" value="BAC76130.1"/>
    <property type="molecule type" value="Genomic_DNA"/>
</dbReference>
<dbReference type="RefSeq" id="NP_848968.1">
    <property type="nucleotide sequence ID" value="NC_004799.1"/>
</dbReference>
<dbReference type="SMR" id="Q85G61"/>
<dbReference type="STRING" id="280699.Q85G61"/>
<dbReference type="GeneID" id="844962"/>
<dbReference type="KEGG" id="cme:CymeCp036"/>
<dbReference type="HOGENOM" id="CLU_218393_2_0_1"/>
<dbReference type="Proteomes" id="UP000007014">
    <property type="component" value="Chloroplast"/>
</dbReference>
<dbReference type="GO" id="GO:0009535">
    <property type="term" value="C:chloroplast thylakoid membrane"/>
    <property type="evidence" value="ECO:0007669"/>
    <property type="project" value="UniProtKB-SubCell"/>
</dbReference>
<dbReference type="GO" id="GO:0009523">
    <property type="term" value="C:photosystem II"/>
    <property type="evidence" value="ECO:0007669"/>
    <property type="project" value="UniProtKB-KW"/>
</dbReference>
<dbReference type="GO" id="GO:0030145">
    <property type="term" value="F:manganese ion binding"/>
    <property type="evidence" value="ECO:0007669"/>
    <property type="project" value="InterPro"/>
</dbReference>
<dbReference type="GO" id="GO:0015979">
    <property type="term" value="P:photosynthesis"/>
    <property type="evidence" value="ECO:0007669"/>
    <property type="project" value="UniProtKB-UniRule"/>
</dbReference>
<dbReference type="HAMAP" id="MF_00717">
    <property type="entry name" value="PSII_PsbY"/>
    <property type="match status" value="1"/>
</dbReference>
<dbReference type="InterPro" id="IPR009388">
    <property type="entry name" value="PSII_PsbY"/>
</dbReference>
<dbReference type="Pfam" id="PF06298">
    <property type="entry name" value="PsbY"/>
    <property type="match status" value="1"/>
</dbReference>
<gene>
    <name evidence="1" type="primary">psbY</name>
</gene>
<feature type="chain" id="PRO_0000216884" description="Photosystem II reaction center protein Y">
    <location>
        <begin position="1"/>
        <end position="35"/>
    </location>
</feature>
<feature type="topological domain" description="Lumenal" evidence="1">
    <location>
        <begin position="1"/>
        <end position="4"/>
    </location>
</feature>
<feature type="transmembrane region" description="Helical" evidence="1">
    <location>
        <begin position="5"/>
        <end position="23"/>
    </location>
</feature>
<feature type="topological domain" description="Stromal" evidence="1">
    <location>
        <begin position="24"/>
        <end position="35"/>
    </location>
</feature>
<reference key="1">
    <citation type="journal article" date="2003" name="DNA Res.">
        <title>Complete sequence and analysis of the plastid genome of the unicellular red alga Cyanidioschyzon merolae.</title>
        <authorList>
            <person name="Ohta N."/>
            <person name="Matsuzaki M."/>
            <person name="Misumi O."/>
            <person name="Miyagishima S.-Y."/>
            <person name="Nozaki H."/>
            <person name="Tanaka K."/>
            <person name="Shin-i T."/>
            <person name="Kohara Y."/>
            <person name="Kuroiwa T."/>
        </authorList>
    </citation>
    <scope>NUCLEOTIDE SEQUENCE [LARGE SCALE GENOMIC DNA]</scope>
    <source>
        <strain>NIES-3377 / 10D</strain>
    </source>
</reference>
<proteinExistence type="inferred from homology"/>
<name>PSBY_CYAM1</name>